<feature type="chain" id="PRO_0000156818" description="Proteolipid protein 2">
    <location>
        <begin position="1"/>
        <end position="152"/>
    </location>
</feature>
<feature type="transmembrane region" description="Helical" evidence="2">
    <location>
        <begin position="25"/>
        <end position="45"/>
    </location>
</feature>
<feature type="transmembrane region" description="Helical" evidence="2">
    <location>
        <begin position="48"/>
        <end position="68"/>
    </location>
</feature>
<feature type="transmembrane region" description="Helical" evidence="2">
    <location>
        <begin position="85"/>
        <end position="105"/>
    </location>
</feature>
<feature type="transmembrane region" description="Helical" evidence="2">
    <location>
        <begin position="112"/>
        <end position="132"/>
    </location>
</feature>
<feature type="domain" description="MARVEL" evidence="3">
    <location>
        <begin position="19"/>
        <end position="137"/>
    </location>
</feature>
<feature type="glycosylation site" description="N-linked (GlcNAc...) asparagine" evidence="2">
    <location>
        <position position="108"/>
    </location>
</feature>
<accession>Q6Y1E2</accession>
<accession>Q3ZBT4</accession>
<organism>
    <name type="scientific">Bos taurus</name>
    <name type="common">Bovine</name>
    <dbReference type="NCBI Taxonomy" id="9913"/>
    <lineage>
        <taxon>Eukaryota</taxon>
        <taxon>Metazoa</taxon>
        <taxon>Chordata</taxon>
        <taxon>Craniata</taxon>
        <taxon>Vertebrata</taxon>
        <taxon>Euteleostomi</taxon>
        <taxon>Mammalia</taxon>
        <taxon>Eutheria</taxon>
        <taxon>Laurasiatheria</taxon>
        <taxon>Artiodactyla</taxon>
        <taxon>Ruminantia</taxon>
        <taxon>Pecora</taxon>
        <taxon>Bovidae</taxon>
        <taxon>Bovinae</taxon>
        <taxon>Bos</taxon>
    </lineage>
</organism>
<dbReference type="EMBL" id="AY192437">
    <property type="protein sequence ID" value="AAP33278.1"/>
    <property type="molecule type" value="mRNA"/>
</dbReference>
<dbReference type="EMBL" id="BC103120">
    <property type="protein sequence ID" value="AAI03121.1"/>
    <property type="molecule type" value="mRNA"/>
</dbReference>
<dbReference type="RefSeq" id="NP_976239.1">
    <property type="nucleotide sequence ID" value="NM_203363.1"/>
</dbReference>
<dbReference type="FunCoup" id="Q6Y1E2">
    <property type="interactions" value="243"/>
</dbReference>
<dbReference type="STRING" id="9913.ENSBTAP00000061516"/>
<dbReference type="GlyCosmos" id="Q6Y1E2">
    <property type="glycosylation" value="1 site, No reported glycans"/>
</dbReference>
<dbReference type="GlyGen" id="Q6Y1E2">
    <property type="glycosylation" value="1 site"/>
</dbReference>
<dbReference type="PaxDb" id="9913-ENSBTAP00000021425"/>
<dbReference type="PeptideAtlas" id="Q6Y1E2"/>
<dbReference type="Ensembl" id="ENSBTAT00000021425.6">
    <property type="protein sequence ID" value="ENSBTAP00000021425.4"/>
    <property type="gene ID" value="ENSBTAG00000016093.6"/>
</dbReference>
<dbReference type="GeneID" id="399683"/>
<dbReference type="KEGG" id="bta:399683"/>
<dbReference type="CTD" id="5355"/>
<dbReference type="VEuPathDB" id="HostDB:ENSBTAG00000016093"/>
<dbReference type="VGNC" id="VGNC:56949">
    <property type="gene designation" value="PLP2"/>
</dbReference>
<dbReference type="eggNOG" id="KOG4788">
    <property type="taxonomic scope" value="Eukaryota"/>
</dbReference>
<dbReference type="GeneTree" id="ENSGT00940000158528"/>
<dbReference type="HOGENOM" id="CLU_108546_4_0_1"/>
<dbReference type="InParanoid" id="Q6Y1E2"/>
<dbReference type="OMA" id="TNFWRTR"/>
<dbReference type="OrthoDB" id="9898022at2759"/>
<dbReference type="TreeFam" id="TF317387"/>
<dbReference type="Proteomes" id="UP000009136">
    <property type="component" value="Chromosome X"/>
</dbReference>
<dbReference type="Bgee" id="ENSBTAG00000016093">
    <property type="expression patterns" value="Expressed in ruminant reticulum and 104 other cell types or tissues"/>
</dbReference>
<dbReference type="GO" id="GO:0016020">
    <property type="term" value="C:membrane"/>
    <property type="evidence" value="ECO:0000318"/>
    <property type="project" value="GO_Central"/>
</dbReference>
<dbReference type="InterPro" id="IPR008253">
    <property type="entry name" value="Marvel"/>
</dbReference>
<dbReference type="InterPro" id="IPR050578">
    <property type="entry name" value="MARVEL-CKLF_proteins"/>
</dbReference>
<dbReference type="PANTHER" id="PTHR22776">
    <property type="entry name" value="MARVEL-CONTAINING POTENTIAL LIPID RAFT-ASSOCIATED PROTEIN"/>
    <property type="match status" value="1"/>
</dbReference>
<dbReference type="PANTHER" id="PTHR22776:SF4">
    <property type="entry name" value="PROTEOLIPID PROTEIN 2"/>
    <property type="match status" value="1"/>
</dbReference>
<dbReference type="Pfam" id="PF01284">
    <property type="entry name" value="MARVEL"/>
    <property type="match status" value="1"/>
</dbReference>
<dbReference type="PROSITE" id="PS51225">
    <property type="entry name" value="MARVEL"/>
    <property type="match status" value="1"/>
</dbReference>
<gene>
    <name type="primary">PLP2</name>
</gene>
<proteinExistence type="evidence at transcript level"/>
<reference key="1">
    <citation type="submission" date="2002-12" db="EMBL/GenBank/DDBJ databases">
        <title>Nucleotide sequence of bovine proteolipid protein 2 cDNA in adipose tissues of Korean cattle (Hanwoo).</title>
        <authorList>
            <person name="Baik M."/>
            <person name="Bong J."/>
        </authorList>
    </citation>
    <scope>NUCLEOTIDE SEQUENCE [MRNA]</scope>
    <source>
        <strain>Korean</strain>
    </source>
</reference>
<reference key="2">
    <citation type="submission" date="2005-08" db="EMBL/GenBank/DDBJ databases">
        <authorList>
            <consortium name="NIH - Mammalian Gene Collection (MGC) project"/>
        </authorList>
    </citation>
    <scope>NUCLEOTIDE SEQUENCE [LARGE SCALE MRNA]</scope>
    <source>
        <strain>Hereford</strain>
        <tissue>Heart ventricle</tissue>
    </source>
</reference>
<comment type="function">
    <text evidence="1">May play a role in cell differentiation in the intestinal epithelium.</text>
</comment>
<comment type="subcellular location">
    <subcellularLocation>
        <location evidence="1">Membrane</location>
        <topology evidence="1">Multi-pass membrane protein</topology>
    </subcellularLocation>
</comment>
<sequence length="152" mass="16646">MADSERLTAPGCWAACTSFSRTRKGFLLFAEIILCLVILICFSTSTSGYSFLSVIEMIFAAIFFVVYMCDLHTKIQIINWPWSDFFRTLVAAILYLITSIVVLVERGNGSKIAAGALGLCAAGLFGYDAYITFPLRQQRHTAAPTDPADGPV</sequence>
<protein>
    <recommendedName>
        <fullName>Proteolipid protein 2</fullName>
    </recommendedName>
</protein>
<keyword id="KW-0325">Glycoprotein</keyword>
<keyword id="KW-0472">Membrane</keyword>
<keyword id="KW-1185">Reference proteome</keyword>
<keyword id="KW-0812">Transmembrane</keyword>
<keyword id="KW-1133">Transmembrane helix</keyword>
<name>PLP2_BOVIN</name>
<evidence type="ECO:0000250" key="1"/>
<evidence type="ECO:0000255" key="2"/>
<evidence type="ECO:0000255" key="3">
    <source>
        <dbReference type="PROSITE-ProRule" id="PRU00581"/>
    </source>
</evidence>